<accession>A4SGA5</accession>
<gene>
    <name evidence="1" type="primary">gltX</name>
    <name type="ordered locus">Cvib_1503</name>
</gene>
<protein>
    <recommendedName>
        <fullName evidence="1">Glutamate--tRNA ligase</fullName>
        <ecNumber evidence="1">6.1.1.17</ecNumber>
    </recommendedName>
    <alternativeName>
        <fullName evidence="1">Glutamyl-tRNA synthetase</fullName>
        <shortName evidence="1">GluRS</shortName>
    </alternativeName>
</protein>
<name>SYE_CHLPM</name>
<proteinExistence type="inferred from homology"/>
<organism>
    <name type="scientific">Chlorobium phaeovibrioides (strain DSM 265 / 1930)</name>
    <name type="common">Prosthecochloris vibrioformis (strain DSM 265)</name>
    <dbReference type="NCBI Taxonomy" id="290318"/>
    <lineage>
        <taxon>Bacteria</taxon>
        <taxon>Pseudomonadati</taxon>
        <taxon>Chlorobiota</taxon>
        <taxon>Chlorobiia</taxon>
        <taxon>Chlorobiales</taxon>
        <taxon>Chlorobiaceae</taxon>
        <taxon>Chlorobium/Pelodictyon group</taxon>
        <taxon>Chlorobium</taxon>
    </lineage>
</organism>
<evidence type="ECO:0000255" key="1">
    <source>
        <dbReference type="HAMAP-Rule" id="MF_00022"/>
    </source>
</evidence>
<reference key="1">
    <citation type="submission" date="2007-03" db="EMBL/GenBank/DDBJ databases">
        <title>Complete sequence of Prosthecochloris vibrioformis DSM 265.</title>
        <authorList>
            <consortium name="US DOE Joint Genome Institute"/>
            <person name="Copeland A."/>
            <person name="Lucas S."/>
            <person name="Lapidus A."/>
            <person name="Barry K."/>
            <person name="Detter J.C."/>
            <person name="Glavina del Rio T."/>
            <person name="Hammon N."/>
            <person name="Israni S."/>
            <person name="Pitluck S."/>
            <person name="Schmutz J."/>
            <person name="Larimer F."/>
            <person name="Land M."/>
            <person name="Hauser L."/>
            <person name="Mikhailova N."/>
            <person name="Li T."/>
            <person name="Overmann J."/>
            <person name="Schuster S.C."/>
            <person name="Bryant D.A."/>
            <person name="Richardson P."/>
        </authorList>
    </citation>
    <scope>NUCLEOTIDE SEQUENCE [LARGE SCALE GENOMIC DNA]</scope>
    <source>
        <strain>DSM 265 / 1930</strain>
    </source>
</reference>
<keyword id="KW-0030">Aminoacyl-tRNA synthetase</keyword>
<keyword id="KW-0067">ATP-binding</keyword>
<keyword id="KW-0963">Cytoplasm</keyword>
<keyword id="KW-0436">Ligase</keyword>
<keyword id="KW-0547">Nucleotide-binding</keyword>
<keyword id="KW-0648">Protein biosynthesis</keyword>
<dbReference type="EC" id="6.1.1.17" evidence="1"/>
<dbReference type="EMBL" id="CP000607">
    <property type="protein sequence ID" value="ABP37514.1"/>
    <property type="molecule type" value="Genomic_DNA"/>
</dbReference>
<dbReference type="SMR" id="A4SGA5"/>
<dbReference type="STRING" id="290318.Cvib_1503"/>
<dbReference type="KEGG" id="pvi:Cvib_1503"/>
<dbReference type="eggNOG" id="COG0008">
    <property type="taxonomic scope" value="Bacteria"/>
</dbReference>
<dbReference type="HOGENOM" id="CLU_015768_6_3_10"/>
<dbReference type="GO" id="GO:0005737">
    <property type="term" value="C:cytoplasm"/>
    <property type="evidence" value="ECO:0007669"/>
    <property type="project" value="UniProtKB-SubCell"/>
</dbReference>
<dbReference type="GO" id="GO:0005524">
    <property type="term" value="F:ATP binding"/>
    <property type="evidence" value="ECO:0007669"/>
    <property type="project" value="UniProtKB-UniRule"/>
</dbReference>
<dbReference type="GO" id="GO:0004818">
    <property type="term" value="F:glutamate-tRNA ligase activity"/>
    <property type="evidence" value="ECO:0007669"/>
    <property type="project" value="UniProtKB-UniRule"/>
</dbReference>
<dbReference type="GO" id="GO:0000049">
    <property type="term" value="F:tRNA binding"/>
    <property type="evidence" value="ECO:0007669"/>
    <property type="project" value="InterPro"/>
</dbReference>
<dbReference type="GO" id="GO:0008270">
    <property type="term" value="F:zinc ion binding"/>
    <property type="evidence" value="ECO:0007669"/>
    <property type="project" value="InterPro"/>
</dbReference>
<dbReference type="GO" id="GO:0006424">
    <property type="term" value="P:glutamyl-tRNA aminoacylation"/>
    <property type="evidence" value="ECO:0007669"/>
    <property type="project" value="UniProtKB-UniRule"/>
</dbReference>
<dbReference type="CDD" id="cd00808">
    <property type="entry name" value="GluRS_core"/>
    <property type="match status" value="1"/>
</dbReference>
<dbReference type="FunFam" id="3.40.50.620:FF:000045">
    <property type="entry name" value="Glutamate--tRNA ligase, mitochondrial"/>
    <property type="match status" value="1"/>
</dbReference>
<dbReference type="Gene3D" id="1.10.10.350">
    <property type="match status" value="1"/>
</dbReference>
<dbReference type="Gene3D" id="3.40.50.620">
    <property type="entry name" value="HUPs"/>
    <property type="match status" value="1"/>
</dbReference>
<dbReference type="HAMAP" id="MF_00022">
    <property type="entry name" value="Glu_tRNA_synth_type1"/>
    <property type="match status" value="1"/>
</dbReference>
<dbReference type="InterPro" id="IPR045462">
    <property type="entry name" value="aa-tRNA-synth_I_cd-bd"/>
</dbReference>
<dbReference type="InterPro" id="IPR020751">
    <property type="entry name" value="aa-tRNA-synth_I_codon-bd_sub2"/>
</dbReference>
<dbReference type="InterPro" id="IPR001412">
    <property type="entry name" value="aa-tRNA-synth_I_CS"/>
</dbReference>
<dbReference type="InterPro" id="IPR008925">
    <property type="entry name" value="aa_tRNA-synth_I_cd-bd_sf"/>
</dbReference>
<dbReference type="InterPro" id="IPR004527">
    <property type="entry name" value="Glu-tRNA-ligase_bac/mito"/>
</dbReference>
<dbReference type="InterPro" id="IPR000924">
    <property type="entry name" value="Glu/Gln-tRNA-synth"/>
</dbReference>
<dbReference type="InterPro" id="IPR020058">
    <property type="entry name" value="Glu/Gln-tRNA-synth_Ib_cat-dom"/>
</dbReference>
<dbReference type="InterPro" id="IPR049940">
    <property type="entry name" value="GluQ/Sye"/>
</dbReference>
<dbReference type="InterPro" id="IPR033910">
    <property type="entry name" value="GluRS_core"/>
</dbReference>
<dbReference type="InterPro" id="IPR014729">
    <property type="entry name" value="Rossmann-like_a/b/a_fold"/>
</dbReference>
<dbReference type="NCBIfam" id="TIGR00464">
    <property type="entry name" value="gltX_bact"/>
    <property type="match status" value="1"/>
</dbReference>
<dbReference type="PANTHER" id="PTHR43311">
    <property type="entry name" value="GLUTAMATE--TRNA LIGASE"/>
    <property type="match status" value="1"/>
</dbReference>
<dbReference type="PANTHER" id="PTHR43311:SF2">
    <property type="entry name" value="GLUTAMATE--TRNA LIGASE, MITOCHONDRIAL-RELATED"/>
    <property type="match status" value="1"/>
</dbReference>
<dbReference type="Pfam" id="PF19269">
    <property type="entry name" value="Anticodon_2"/>
    <property type="match status" value="1"/>
</dbReference>
<dbReference type="Pfam" id="PF00749">
    <property type="entry name" value="tRNA-synt_1c"/>
    <property type="match status" value="1"/>
</dbReference>
<dbReference type="PRINTS" id="PR00987">
    <property type="entry name" value="TRNASYNTHGLU"/>
</dbReference>
<dbReference type="SUPFAM" id="SSF48163">
    <property type="entry name" value="An anticodon-binding domain of class I aminoacyl-tRNA synthetases"/>
    <property type="match status" value="1"/>
</dbReference>
<dbReference type="SUPFAM" id="SSF52374">
    <property type="entry name" value="Nucleotidylyl transferase"/>
    <property type="match status" value="1"/>
</dbReference>
<dbReference type="PROSITE" id="PS00178">
    <property type="entry name" value="AA_TRNA_LIGASE_I"/>
    <property type="match status" value="1"/>
</dbReference>
<feature type="chain" id="PRO_0000367739" description="Glutamate--tRNA ligase">
    <location>
        <begin position="1"/>
        <end position="521"/>
    </location>
</feature>
<feature type="short sequence motif" description="'HIGH' region" evidence="1">
    <location>
        <begin position="30"/>
        <end position="40"/>
    </location>
</feature>
<feature type="short sequence motif" description="'KMSKS' region" evidence="1">
    <location>
        <begin position="277"/>
        <end position="281"/>
    </location>
</feature>
<feature type="binding site" evidence="1">
    <location>
        <position position="280"/>
    </location>
    <ligand>
        <name>ATP</name>
        <dbReference type="ChEBI" id="CHEBI:30616"/>
    </ligand>
</feature>
<sequence length="521" mass="59828">MFLTDGSSLNSLTMTRRMMVGKRVRTRFAPSPTGYLHVGGLRTALYNYLFAKRMDGDFVVRIEDTDQSRKVADAQENLIKTLEWAGLMPDESPLHGGDFGPYLQSERLDIYKKYCEQLLEAGHAYHCFATSEELEENRQLQLKQGLQPKYNRKWLPEDMGGSMPRSEIQKKLDEGVPSVVRMKVPDYVSVWFEDIIRGPIEFDSATIDDQVLMKSDGFPTYHFASVIDDHLMEFTHIIRGEEWLPSMPKHLLLYEFLGWEPPKYAHLPLLLNPDRSKLSKRQGDVSVEDYIRKGYSGEAIVNFVALLGWNQGEGCEQEVYSLQELTERFSLERVGKAGSIFTIDKLNWLEKQYIKNRPAEDIIRVIKPLLLSELEKKETLLDPATITGERYLEDVIELMRERVGFEREFVTFSSYFFFEPETYEEDAVKKRWTPDTNSLLDEFLPVLESMPDFTAEAIEAALKEFVAPKGLKAAALIHPLRIVSSGVSFGPSLYHMLEVLGREAVVRRIRKGMAVITLPQQ</sequence>
<comment type="function">
    <text evidence="1">Catalyzes the attachment of glutamate to tRNA(Glu) in a two-step reaction: glutamate is first activated by ATP to form Glu-AMP and then transferred to the acceptor end of tRNA(Glu).</text>
</comment>
<comment type="catalytic activity">
    <reaction evidence="1">
        <text>tRNA(Glu) + L-glutamate + ATP = L-glutamyl-tRNA(Glu) + AMP + diphosphate</text>
        <dbReference type="Rhea" id="RHEA:23540"/>
        <dbReference type="Rhea" id="RHEA-COMP:9663"/>
        <dbReference type="Rhea" id="RHEA-COMP:9680"/>
        <dbReference type="ChEBI" id="CHEBI:29985"/>
        <dbReference type="ChEBI" id="CHEBI:30616"/>
        <dbReference type="ChEBI" id="CHEBI:33019"/>
        <dbReference type="ChEBI" id="CHEBI:78442"/>
        <dbReference type="ChEBI" id="CHEBI:78520"/>
        <dbReference type="ChEBI" id="CHEBI:456215"/>
        <dbReference type="EC" id="6.1.1.17"/>
    </reaction>
</comment>
<comment type="subunit">
    <text evidence="1">Monomer.</text>
</comment>
<comment type="subcellular location">
    <subcellularLocation>
        <location evidence="1">Cytoplasm</location>
    </subcellularLocation>
</comment>
<comment type="similarity">
    <text evidence="1">Belongs to the class-I aminoacyl-tRNA synthetase family. Glutamate--tRNA ligase type 1 subfamily.</text>
</comment>